<feature type="chain" id="PRO_1000015351" description="Large-conductance mechanosensitive channel">
    <location>
        <begin position="1"/>
        <end position="131"/>
    </location>
</feature>
<feature type="transmembrane region" description="Helical" evidence="1">
    <location>
        <begin position="14"/>
        <end position="34"/>
    </location>
</feature>
<feature type="transmembrane region" description="Helical" evidence="1">
    <location>
        <begin position="38"/>
        <end position="58"/>
    </location>
</feature>
<feature type="transmembrane region" description="Helical" evidence="1">
    <location>
        <begin position="67"/>
        <end position="87"/>
    </location>
</feature>
<keyword id="KW-1003">Cell membrane</keyword>
<keyword id="KW-0407">Ion channel</keyword>
<keyword id="KW-0406">Ion transport</keyword>
<keyword id="KW-0472">Membrane</keyword>
<keyword id="KW-0812">Transmembrane</keyword>
<keyword id="KW-1133">Transmembrane helix</keyword>
<keyword id="KW-0813">Transport</keyword>
<reference key="1">
    <citation type="journal article" date="2007" name="Nat. Biotechnol.">
        <title>Comparative analysis of the complete genome sequence of the plant growth-promoting bacterium Bacillus amyloliquefaciens FZB42.</title>
        <authorList>
            <person name="Chen X.H."/>
            <person name="Koumoutsi A."/>
            <person name="Scholz R."/>
            <person name="Eisenreich A."/>
            <person name="Schneider K."/>
            <person name="Heinemeyer I."/>
            <person name="Morgenstern B."/>
            <person name="Voss B."/>
            <person name="Hess W.R."/>
            <person name="Reva O."/>
            <person name="Junge H."/>
            <person name="Voigt B."/>
            <person name="Jungblut P.R."/>
            <person name="Vater J."/>
            <person name="Suessmuth R."/>
            <person name="Liesegang H."/>
            <person name="Strittmatter A."/>
            <person name="Gottschalk G."/>
            <person name="Borriss R."/>
        </authorList>
    </citation>
    <scope>NUCLEOTIDE SEQUENCE [LARGE SCALE GENOMIC DNA]</scope>
    <source>
        <strain>DSM 23117 / BGSC 10A6 / LMG 26770 / FZB42</strain>
    </source>
</reference>
<organism>
    <name type="scientific">Bacillus velezensis (strain DSM 23117 / BGSC 10A6 / LMG 26770 / FZB42)</name>
    <name type="common">Bacillus amyloliquefaciens subsp. plantarum</name>
    <dbReference type="NCBI Taxonomy" id="326423"/>
    <lineage>
        <taxon>Bacteria</taxon>
        <taxon>Bacillati</taxon>
        <taxon>Bacillota</taxon>
        <taxon>Bacilli</taxon>
        <taxon>Bacillales</taxon>
        <taxon>Bacillaceae</taxon>
        <taxon>Bacillus</taxon>
        <taxon>Bacillus amyloliquefaciens group</taxon>
    </lineage>
</organism>
<protein>
    <recommendedName>
        <fullName evidence="1">Large-conductance mechanosensitive channel</fullName>
    </recommendedName>
</protein>
<comment type="function">
    <text evidence="1">Channel that opens in response to stretch forces in the membrane lipid bilayer. May participate in the regulation of osmotic pressure changes within the cell.</text>
</comment>
<comment type="subunit">
    <text evidence="1">Homopentamer.</text>
</comment>
<comment type="subcellular location">
    <subcellularLocation>
        <location evidence="1">Cell membrane</location>
        <topology evidence="1">Multi-pass membrane protein</topology>
    </subcellularLocation>
</comment>
<comment type="similarity">
    <text evidence="1">Belongs to the MscL family.</text>
</comment>
<proteinExistence type="inferred from homology"/>
<gene>
    <name evidence="1" type="primary">mscL</name>
    <name type="ordered locus">RBAM_033560</name>
</gene>
<sequence>MWSEFKSFAMRGNIMDLAIGVVIGGAFGKIVTSLVEDIIMPLVGLLLGGLDFSGLAVTFGDAHIKYGSFIQTIVNFFIISFSIFIVIRTIGKLRRKKEAEEEAEEAEETDQQTELLTEIRDLLKQRAPHND</sequence>
<name>MSCL_BACVZ</name>
<evidence type="ECO:0000255" key="1">
    <source>
        <dbReference type="HAMAP-Rule" id="MF_00115"/>
    </source>
</evidence>
<accession>A7Z9K9</accession>
<dbReference type="EMBL" id="CP000560">
    <property type="protein sequence ID" value="ABS75685.1"/>
    <property type="molecule type" value="Genomic_DNA"/>
</dbReference>
<dbReference type="RefSeq" id="WP_003151243.1">
    <property type="nucleotide sequence ID" value="NC_009725.2"/>
</dbReference>
<dbReference type="SMR" id="A7Z9K9"/>
<dbReference type="GeneID" id="93082500"/>
<dbReference type="KEGG" id="bay:RBAM_033560"/>
<dbReference type="HOGENOM" id="CLU_095787_0_0_9"/>
<dbReference type="Proteomes" id="UP000001120">
    <property type="component" value="Chromosome"/>
</dbReference>
<dbReference type="GO" id="GO:0005886">
    <property type="term" value="C:plasma membrane"/>
    <property type="evidence" value="ECO:0007669"/>
    <property type="project" value="UniProtKB-SubCell"/>
</dbReference>
<dbReference type="GO" id="GO:0008381">
    <property type="term" value="F:mechanosensitive monoatomic ion channel activity"/>
    <property type="evidence" value="ECO:0007669"/>
    <property type="project" value="UniProtKB-UniRule"/>
</dbReference>
<dbReference type="FunFam" id="1.10.1200.120:FF:000001">
    <property type="entry name" value="Large-conductance mechanosensitive channel"/>
    <property type="match status" value="1"/>
</dbReference>
<dbReference type="Gene3D" id="1.10.1200.120">
    <property type="entry name" value="Large-conductance mechanosensitive channel, MscL, domain 1"/>
    <property type="match status" value="1"/>
</dbReference>
<dbReference type="HAMAP" id="MF_00115">
    <property type="entry name" value="MscL"/>
    <property type="match status" value="1"/>
</dbReference>
<dbReference type="InterPro" id="IPR019823">
    <property type="entry name" value="Mechanosensitive_channel_CS"/>
</dbReference>
<dbReference type="InterPro" id="IPR001185">
    <property type="entry name" value="MS_channel"/>
</dbReference>
<dbReference type="InterPro" id="IPR037673">
    <property type="entry name" value="MSC/AndL"/>
</dbReference>
<dbReference type="InterPro" id="IPR036019">
    <property type="entry name" value="MscL_channel"/>
</dbReference>
<dbReference type="NCBIfam" id="TIGR00220">
    <property type="entry name" value="mscL"/>
    <property type="match status" value="1"/>
</dbReference>
<dbReference type="NCBIfam" id="NF001843">
    <property type="entry name" value="PRK00567.1-4"/>
    <property type="match status" value="1"/>
</dbReference>
<dbReference type="NCBIfam" id="NF010560">
    <property type="entry name" value="PRK13955.1"/>
    <property type="match status" value="1"/>
</dbReference>
<dbReference type="PANTHER" id="PTHR30266:SF2">
    <property type="entry name" value="LARGE-CONDUCTANCE MECHANOSENSITIVE CHANNEL"/>
    <property type="match status" value="1"/>
</dbReference>
<dbReference type="PANTHER" id="PTHR30266">
    <property type="entry name" value="MECHANOSENSITIVE CHANNEL MSCL"/>
    <property type="match status" value="1"/>
</dbReference>
<dbReference type="Pfam" id="PF01741">
    <property type="entry name" value="MscL"/>
    <property type="match status" value="1"/>
</dbReference>
<dbReference type="PRINTS" id="PR01264">
    <property type="entry name" value="MECHCHANNEL"/>
</dbReference>
<dbReference type="SUPFAM" id="SSF81330">
    <property type="entry name" value="Gated mechanosensitive channel"/>
    <property type="match status" value="1"/>
</dbReference>
<dbReference type="PROSITE" id="PS01327">
    <property type="entry name" value="MSCL"/>
    <property type="match status" value="1"/>
</dbReference>